<comment type="function">
    <text evidence="1">An essential GTPase that binds both GDP and GTP, with rapid nucleotide exchange. Plays a role in 16S rRNA processing and 30S ribosomal subunit biogenesis and possibly also in cell cycle regulation and energy metabolism.</text>
</comment>
<comment type="subunit">
    <text evidence="1">Monomer.</text>
</comment>
<comment type="subcellular location">
    <subcellularLocation>
        <location>Cytoplasm</location>
    </subcellularLocation>
    <subcellularLocation>
        <location evidence="1">Cell inner membrane</location>
        <topology evidence="1">Peripheral membrane protein</topology>
    </subcellularLocation>
</comment>
<comment type="similarity">
    <text evidence="1 2">Belongs to the TRAFAC class TrmE-Era-EngA-EngB-Septin-like GTPase superfamily. Era GTPase family.</text>
</comment>
<sequence length="301" mass="34422">MKTKAGFVALIGKPNAGKSTLLNTLLNAHLALVSHKANATRKLMKCIVPFKDKEGYESQIIFLDTPGLHHQEKLLNQCMLSQALKAMGDAELCVFLASVHDDLKGYEEFLSLCQKPHILALSKIDTATHKQVLQKLQEYQQYDSQFLALVPLSAKKSQNLNALLECISKHLNPSAWLFEKDLMSDEKMRDIYKEIIRESLFDFLSDEIPYESDVMIDKFIEEERIDKVYARIIVEKESQKKIVIGKNGVNIKRIGTSARLKMQEVGEKKVFLNLQVIAQKSWSKEEKSLQKLGYTHQRNRD</sequence>
<keyword id="KW-0997">Cell inner membrane</keyword>
<keyword id="KW-1003">Cell membrane</keyword>
<keyword id="KW-0963">Cytoplasm</keyword>
<keyword id="KW-0342">GTP-binding</keyword>
<keyword id="KW-0472">Membrane</keyword>
<keyword id="KW-0547">Nucleotide-binding</keyword>
<keyword id="KW-0690">Ribosome biogenesis</keyword>
<keyword id="KW-0694">RNA-binding</keyword>
<keyword id="KW-0699">rRNA-binding</keyword>
<name>ERA_HELP2</name>
<reference key="1">
    <citation type="submission" date="2008-10" db="EMBL/GenBank/DDBJ databases">
        <title>The complete genome sequence of Helicobacter pylori strain P12.</title>
        <authorList>
            <person name="Fischer W."/>
            <person name="Windhager L."/>
            <person name="Karnholz A."/>
            <person name="Zeiller M."/>
            <person name="Zimmer R."/>
            <person name="Haas R."/>
        </authorList>
    </citation>
    <scope>NUCLEOTIDE SEQUENCE [LARGE SCALE GENOMIC DNA]</scope>
    <source>
        <strain>P12</strain>
    </source>
</reference>
<feature type="chain" id="PRO_1000121331" description="GTPase Era">
    <location>
        <begin position="1"/>
        <end position="301"/>
    </location>
</feature>
<feature type="domain" description="Era-type G" evidence="2">
    <location>
        <begin position="4"/>
        <end position="173"/>
    </location>
</feature>
<feature type="domain" description="KH type-2" evidence="1">
    <location>
        <begin position="204"/>
        <end position="280"/>
    </location>
</feature>
<feature type="region of interest" description="G1" evidence="2">
    <location>
        <begin position="12"/>
        <end position="19"/>
    </location>
</feature>
<feature type="region of interest" description="G2" evidence="2">
    <location>
        <begin position="38"/>
        <end position="42"/>
    </location>
</feature>
<feature type="region of interest" description="G3" evidence="2">
    <location>
        <begin position="64"/>
        <end position="67"/>
    </location>
</feature>
<feature type="region of interest" description="G4" evidence="2">
    <location>
        <begin position="122"/>
        <end position="125"/>
    </location>
</feature>
<feature type="region of interest" description="G5" evidence="2">
    <location>
        <begin position="152"/>
        <end position="154"/>
    </location>
</feature>
<feature type="binding site" evidence="1">
    <location>
        <begin position="12"/>
        <end position="19"/>
    </location>
    <ligand>
        <name>GTP</name>
        <dbReference type="ChEBI" id="CHEBI:37565"/>
    </ligand>
</feature>
<feature type="binding site" evidence="1">
    <location>
        <begin position="64"/>
        <end position="68"/>
    </location>
    <ligand>
        <name>GTP</name>
        <dbReference type="ChEBI" id="CHEBI:37565"/>
    </ligand>
</feature>
<feature type="binding site" evidence="1">
    <location>
        <begin position="122"/>
        <end position="125"/>
    </location>
    <ligand>
        <name>GTP</name>
        <dbReference type="ChEBI" id="CHEBI:37565"/>
    </ligand>
</feature>
<evidence type="ECO:0000255" key="1">
    <source>
        <dbReference type="HAMAP-Rule" id="MF_00367"/>
    </source>
</evidence>
<evidence type="ECO:0000255" key="2">
    <source>
        <dbReference type="PROSITE-ProRule" id="PRU01050"/>
    </source>
</evidence>
<organism>
    <name type="scientific">Helicobacter pylori (strain P12)</name>
    <dbReference type="NCBI Taxonomy" id="570508"/>
    <lineage>
        <taxon>Bacteria</taxon>
        <taxon>Pseudomonadati</taxon>
        <taxon>Campylobacterota</taxon>
        <taxon>Epsilonproteobacteria</taxon>
        <taxon>Campylobacterales</taxon>
        <taxon>Helicobacteraceae</taxon>
        <taxon>Helicobacter</taxon>
    </lineage>
</organism>
<protein>
    <recommendedName>
        <fullName evidence="1">GTPase Era</fullName>
    </recommendedName>
</protein>
<proteinExistence type="inferred from homology"/>
<gene>
    <name evidence="1" type="primary">era</name>
    <name type="ordered locus">HPP12_0523</name>
</gene>
<accession>B6JL99</accession>
<dbReference type="EMBL" id="CP001217">
    <property type="protein sequence ID" value="ACJ07677.1"/>
    <property type="molecule type" value="Genomic_DNA"/>
</dbReference>
<dbReference type="SMR" id="B6JL99"/>
<dbReference type="KEGG" id="hpp:HPP12_0523"/>
<dbReference type="HOGENOM" id="CLU_038009_1_0_7"/>
<dbReference type="Proteomes" id="UP000008198">
    <property type="component" value="Chromosome"/>
</dbReference>
<dbReference type="GO" id="GO:0005829">
    <property type="term" value="C:cytosol"/>
    <property type="evidence" value="ECO:0007669"/>
    <property type="project" value="TreeGrafter"/>
</dbReference>
<dbReference type="GO" id="GO:0005886">
    <property type="term" value="C:plasma membrane"/>
    <property type="evidence" value="ECO:0007669"/>
    <property type="project" value="UniProtKB-SubCell"/>
</dbReference>
<dbReference type="GO" id="GO:0005525">
    <property type="term" value="F:GTP binding"/>
    <property type="evidence" value="ECO:0007669"/>
    <property type="project" value="UniProtKB-UniRule"/>
</dbReference>
<dbReference type="GO" id="GO:0003924">
    <property type="term" value="F:GTPase activity"/>
    <property type="evidence" value="ECO:0007669"/>
    <property type="project" value="UniProtKB-UniRule"/>
</dbReference>
<dbReference type="GO" id="GO:0043024">
    <property type="term" value="F:ribosomal small subunit binding"/>
    <property type="evidence" value="ECO:0007669"/>
    <property type="project" value="TreeGrafter"/>
</dbReference>
<dbReference type="GO" id="GO:0070181">
    <property type="term" value="F:small ribosomal subunit rRNA binding"/>
    <property type="evidence" value="ECO:0007669"/>
    <property type="project" value="UniProtKB-UniRule"/>
</dbReference>
<dbReference type="GO" id="GO:0000028">
    <property type="term" value="P:ribosomal small subunit assembly"/>
    <property type="evidence" value="ECO:0007669"/>
    <property type="project" value="TreeGrafter"/>
</dbReference>
<dbReference type="CDD" id="cd04163">
    <property type="entry name" value="Era"/>
    <property type="match status" value="1"/>
</dbReference>
<dbReference type="CDD" id="cd22534">
    <property type="entry name" value="KH-II_Era"/>
    <property type="match status" value="1"/>
</dbReference>
<dbReference type="FunFam" id="3.40.50.300:FF:002442">
    <property type="entry name" value="GTPase Era"/>
    <property type="match status" value="1"/>
</dbReference>
<dbReference type="Gene3D" id="3.30.300.20">
    <property type="match status" value="1"/>
</dbReference>
<dbReference type="Gene3D" id="3.40.50.300">
    <property type="entry name" value="P-loop containing nucleotide triphosphate hydrolases"/>
    <property type="match status" value="1"/>
</dbReference>
<dbReference type="HAMAP" id="MF_00367">
    <property type="entry name" value="GTPase_Era"/>
    <property type="match status" value="1"/>
</dbReference>
<dbReference type="InterPro" id="IPR030388">
    <property type="entry name" value="G_ERA_dom"/>
</dbReference>
<dbReference type="InterPro" id="IPR006073">
    <property type="entry name" value="GTP-bd"/>
</dbReference>
<dbReference type="InterPro" id="IPR005662">
    <property type="entry name" value="GTPase_Era-like"/>
</dbReference>
<dbReference type="InterPro" id="IPR015946">
    <property type="entry name" value="KH_dom-like_a/b"/>
</dbReference>
<dbReference type="InterPro" id="IPR004044">
    <property type="entry name" value="KH_dom_type_2"/>
</dbReference>
<dbReference type="InterPro" id="IPR009019">
    <property type="entry name" value="KH_sf_prok-type"/>
</dbReference>
<dbReference type="InterPro" id="IPR027417">
    <property type="entry name" value="P-loop_NTPase"/>
</dbReference>
<dbReference type="InterPro" id="IPR005225">
    <property type="entry name" value="Small_GTP-bd"/>
</dbReference>
<dbReference type="NCBIfam" id="TIGR00436">
    <property type="entry name" value="era"/>
    <property type="match status" value="1"/>
</dbReference>
<dbReference type="NCBIfam" id="NF000908">
    <property type="entry name" value="PRK00089.1"/>
    <property type="match status" value="1"/>
</dbReference>
<dbReference type="NCBIfam" id="TIGR00231">
    <property type="entry name" value="small_GTP"/>
    <property type="match status" value="1"/>
</dbReference>
<dbReference type="PANTHER" id="PTHR42698">
    <property type="entry name" value="GTPASE ERA"/>
    <property type="match status" value="1"/>
</dbReference>
<dbReference type="PANTHER" id="PTHR42698:SF1">
    <property type="entry name" value="GTPASE ERA, MITOCHONDRIAL"/>
    <property type="match status" value="1"/>
</dbReference>
<dbReference type="Pfam" id="PF07650">
    <property type="entry name" value="KH_2"/>
    <property type="match status" value="1"/>
</dbReference>
<dbReference type="Pfam" id="PF01926">
    <property type="entry name" value="MMR_HSR1"/>
    <property type="match status" value="1"/>
</dbReference>
<dbReference type="SUPFAM" id="SSF52540">
    <property type="entry name" value="P-loop containing nucleoside triphosphate hydrolases"/>
    <property type="match status" value="1"/>
</dbReference>
<dbReference type="SUPFAM" id="SSF54814">
    <property type="entry name" value="Prokaryotic type KH domain (KH-domain type II)"/>
    <property type="match status" value="1"/>
</dbReference>
<dbReference type="PROSITE" id="PS51713">
    <property type="entry name" value="G_ERA"/>
    <property type="match status" value="1"/>
</dbReference>
<dbReference type="PROSITE" id="PS50823">
    <property type="entry name" value="KH_TYPE_2"/>
    <property type="match status" value="1"/>
</dbReference>